<proteinExistence type="inferred from homology"/>
<feature type="chain" id="PRO_0000175785" description="Probable transcriptional regulatory protein CT1665">
    <location>
        <begin position="1"/>
        <end position="251"/>
    </location>
</feature>
<organism>
    <name type="scientific">Chlorobaculum tepidum (strain ATCC 49652 / DSM 12025 / NBRC 103806 / TLS)</name>
    <name type="common">Chlorobium tepidum</name>
    <dbReference type="NCBI Taxonomy" id="194439"/>
    <lineage>
        <taxon>Bacteria</taxon>
        <taxon>Pseudomonadati</taxon>
        <taxon>Chlorobiota</taxon>
        <taxon>Chlorobiia</taxon>
        <taxon>Chlorobiales</taxon>
        <taxon>Chlorobiaceae</taxon>
        <taxon>Chlorobaculum</taxon>
    </lineage>
</organism>
<protein>
    <recommendedName>
        <fullName evidence="1">Probable transcriptional regulatory protein CT1665</fullName>
    </recommendedName>
</protein>
<sequence>MSGHSKWATIKRKKAATDQKRGSLFTKLVKEITIAAKMGGGDPTGNPRLRLAIDTARANSMPMDNIQRAIKRGTGELEGATYEEITYEGYGPGGIAIIIETATDNRNRTVADIRHLMSRGGGSLGESGSVGWMFKRKGSIEVPRSAISEDDLMELLLDAGLEELESDDEQYFTVLTDVKDLEPVKKALEEAGIPFENAKIDMIPDNYVELDVENARKALKLIDALENSDDVQAVYSNMDMSESVMSVLEEE</sequence>
<accession>Q8KBW7</accession>
<dbReference type="EMBL" id="AE006470">
    <property type="protein sequence ID" value="AAM72890.1"/>
    <property type="molecule type" value="Genomic_DNA"/>
</dbReference>
<dbReference type="RefSeq" id="NP_662548.1">
    <property type="nucleotide sequence ID" value="NC_002932.3"/>
</dbReference>
<dbReference type="RefSeq" id="WP_010933329.1">
    <property type="nucleotide sequence ID" value="NC_002932.3"/>
</dbReference>
<dbReference type="SMR" id="Q8KBW7"/>
<dbReference type="STRING" id="194439.CT1665"/>
<dbReference type="EnsemblBacteria" id="AAM72890">
    <property type="protein sequence ID" value="AAM72890"/>
    <property type="gene ID" value="CT1665"/>
</dbReference>
<dbReference type="KEGG" id="cte:CT1665"/>
<dbReference type="PATRIC" id="fig|194439.7.peg.1503"/>
<dbReference type="eggNOG" id="COG0217">
    <property type="taxonomic scope" value="Bacteria"/>
</dbReference>
<dbReference type="HOGENOM" id="CLU_062974_2_2_10"/>
<dbReference type="OrthoDB" id="9781053at2"/>
<dbReference type="Proteomes" id="UP000001007">
    <property type="component" value="Chromosome"/>
</dbReference>
<dbReference type="GO" id="GO:0005829">
    <property type="term" value="C:cytosol"/>
    <property type="evidence" value="ECO:0007669"/>
    <property type="project" value="TreeGrafter"/>
</dbReference>
<dbReference type="GO" id="GO:0003677">
    <property type="term" value="F:DNA binding"/>
    <property type="evidence" value="ECO:0007669"/>
    <property type="project" value="UniProtKB-UniRule"/>
</dbReference>
<dbReference type="GO" id="GO:0006355">
    <property type="term" value="P:regulation of DNA-templated transcription"/>
    <property type="evidence" value="ECO:0007669"/>
    <property type="project" value="UniProtKB-UniRule"/>
</dbReference>
<dbReference type="FunFam" id="1.10.10.200:FF:000002">
    <property type="entry name" value="Probable transcriptional regulatory protein CLM62_37755"/>
    <property type="match status" value="1"/>
</dbReference>
<dbReference type="Gene3D" id="1.10.10.200">
    <property type="match status" value="1"/>
</dbReference>
<dbReference type="Gene3D" id="3.30.70.980">
    <property type="match status" value="2"/>
</dbReference>
<dbReference type="HAMAP" id="MF_00693">
    <property type="entry name" value="Transcrip_reg_TACO1"/>
    <property type="match status" value="1"/>
</dbReference>
<dbReference type="InterPro" id="IPR017856">
    <property type="entry name" value="Integrase-like_N"/>
</dbReference>
<dbReference type="InterPro" id="IPR048300">
    <property type="entry name" value="TACO1_YebC-like_2nd/3rd_dom"/>
</dbReference>
<dbReference type="InterPro" id="IPR049083">
    <property type="entry name" value="TACO1_YebC_N"/>
</dbReference>
<dbReference type="InterPro" id="IPR002876">
    <property type="entry name" value="Transcrip_reg_TACO1-like"/>
</dbReference>
<dbReference type="InterPro" id="IPR026564">
    <property type="entry name" value="Transcrip_reg_TACO1-like_dom3"/>
</dbReference>
<dbReference type="InterPro" id="IPR029072">
    <property type="entry name" value="YebC-like"/>
</dbReference>
<dbReference type="NCBIfam" id="NF001030">
    <property type="entry name" value="PRK00110.1"/>
    <property type="match status" value="1"/>
</dbReference>
<dbReference type="NCBIfam" id="NF009044">
    <property type="entry name" value="PRK12378.1"/>
    <property type="match status" value="1"/>
</dbReference>
<dbReference type="NCBIfam" id="TIGR01033">
    <property type="entry name" value="YebC/PmpR family DNA-binding transcriptional regulator"/>
    <property type="match status" value="1"/>
</dbReference>
<dbReference type="PANTHER" id="PTHR12532:SF6">
    <property type="entry name" value="TRANSCRIPTIONAL REGULATORY PROTEIN YEBC-RELATED"/>
    <property type="match status" value="1"/>
</dbReference>
<dbReference type="PANTHER" id="PTHR12532">
    <property type="entry name" value="TRANSLATIONAL ACTIVATOR OF CYTOCHROME C OXIDASE 1"/>
    <property type="match status" value="1"/>
</dbReference>
<dbReference type="Pfam" id="PF20772">
    <property type="entry name" value="TACO1_YebC_N"/>
    <property type="match status" value="1"/>
</dbReference>
<dbReference type="Pfam" id="PF01709">
    <property type="entry name" value="Transcrip_reg"/>
    <property type="match status" value="1"/>
</dbReference>
<dbReference type="SUPFAM" id="SSF75625">
    <property type="entry name" value="YebC-like"/>
    <property type="match status" value="1"/>
</dbReference>
<comment type="subcellular location">
    <subcellularLocation>
        <location evidence="1">Cytoplasm</location>
    </subcellularLocation>
</comment>
<comment type="similarity">
    <text evidence="1">Belongs to the TACO1 family.</text>
</comment>
<name>Y1665_CHLTE</name>
<gene>
    <name type="ordered locus">CT1665</name>
</gene>
<reference key="1">
    <citation type="journal article" date="2002" name="Proc. Natl. Acad. Sci. U.S.A.">
        <title>The complete genome sequence of Chlorobium tepidum TLS, a photosynthetic, anaerobic, green-sulfur bacterium.</title>
        <authorList>
            <person name="Eisen J.A."/>
            <person name="Nelson K.E."/>
            <person name="Paulsen I.T."/>
            <person name="Heidelberg J.F."/>
            <person name="Wu M."/>
            <person name="Dodson R.J."/>
            <person name="DeBoy R.T."/>
            <person name="Gwinn M.L."/>
            <person name="Nelson W.C."/>
            <person name="Haft D.H."/>
            <person name="Hickey E.K."/>
            <person name="Peterson J.D."/>
            <person name="Durkin A.S."/>
            <person name="Kolonay J.F."/>
            <person name="Yang F."/>
            <person name="Holt I.E."/>
            <person name="Umayam L.A."/>
            <person name="Mason T.M."/>
            <person name="Brenner M."/>
            <person name="Shea T.P."/>
            <person name="Parksey D.S."/>
            <person name="Nierman W.C."/>
            <person name="Feldblyum T.V."/>
            <person name="Hansen C.L."/>
            <person name="Craven M.B."/>
            <person name="Radune D."/>
            <person name="Vamathevan J.J."/>
            <person name="Khouri H.M."/>
            <person name="White O."/>
            <person name="Gruber T.M."/>
            <person name="Ketchum K.A."/>
            <person name="Venter J.C."/>
            <person name="Tettelin H."/>
            <person name="Bryant D.A."/>
            <person name="Fraser C.M."/>
        </authorList>
    </citation>
    <scope>NUCLEOTIDE SEQUENCE [LARGE SCALE GENOMIC DNA]</scope>
    <source>
        <strain>ATCC 49652 / DSM 12025 / NBRC 103806 / TLS</strain>
    </source>
</reference>
<evidence type="ECO:0000255" key="1">
    <source>
        <dbReference type="HAMAP-Rule" id="MF_00693"/>
    </source>
</evidence>
<keyword id="KW-0963">Cytoplasm</keyword>
<keyword id="KW-0238">DNA-binding</keyword>
<keyword id="KW-1185">Reference proteome</keyword>
<keyword id="KW-0804">Transcription</keyword>
<keyword id="KW-0805">Transcription regulation</keyword>